<comment type="function">
    <text evidence="1">Catalyzes the reversible hydration of cis-homoaconitate to (2R,3S)-homoisocitrate, a step in the alpha-aminoadipate pathway for lysine biosynthesis.</text>
</comment>
<comment type="catalytic activity">
    <reaction>
        <text>(2R,3S)-homoisocitrate = cis-homoaconitate + H2O</text>
        <dbReference type="Rhea" id="RHEA:15485"/>
        <dbReference type="ChEBI" id="CHEBI:15377"/>
        <dbReference type="ChEBI" id="CHEBI:15404"/>
        <dbReference type="ChEBI" id="CHEBI:58174"/>
        <dbReference type="EC" id="4.2.1.36"/>
    </reaction>
</comment>
<comment type="cofactor">
    <cofactor evidence="1">
        <name>[4Fe-4S] cluster</name>
        <dbReference type="ChEBI" id="CHEBI:49883"/>
    </cofactor>
    <text evidence="1">Binds 1 [4Fe-4S] cluster per subunit.</text>
</comment>
<comment type="pathway">
    <text>Amino-acid biosynthesis; L-lysine biosynthesis via AAA pathway; L-alpha-aminoadipate from 2-oxoglutarate: step 3/5.</text>
</comment>
<comment type="subcellular location">
    <subcellularLocation>
        <location evidence="1">Mitochondrion</location>
    </subcellularLocation>
</comment>
<comment type="similarity">
    <text evidence="3">Belongs to the aconitase/IPM isomerase family.</text>
</comment>
<dbReference type="EC" id="4.2.1.36"/>
<dbReference type="EMBL" id="CP017626">
    <property type="protein sequence ID" value="AOW29190.1"/>
    <property type="molecule type" value="Genomic_DNA"/>
</dbReference>
<dbReference type="RefSeq" id="XP_717250.1">
    <property type="nucleotide sequence ID" value="XM_712157.2"/>
</dbReference>
<dbReference type="SMR" id="Q5A644"/>
<dbReference type="FunCoup" id="Q5A644">
    <property type="interactions" value="152"/>
</dbReference>
<dbReference type="STRING" id="237561.Q5A644"/>
<dbReference type="EnsemblFungi" id="C4_04410C_A-T">
    <property type="protein sequence ID" value="C4_04410C_A-T-p1"/>
    <property type="gene ID" value="C4_04410C_A"/>
</dbReference>
<dbReference type="GeneID" id="3641180"/>
<dbReference type="KEGG" id="cal:CAALFM_C404410CA"/>
<dbReference type="CGD" id="CAL0000195924">
    <property type="gene designation" value="LYS4"/>
</dbReference>
<dbReference type="VEuPathDB" id="FungiDB:C4_04410C_A"/>
<dbReference type="eggNOG" id="KOG0453">
    <property type="taxonomic scope" value="Eukaryota"/>
</dbReference>
<dbReference type="HOGENOM" id="CLU_006714_3_1_1"/>
<dbReference type="InParanoid" id="Q5A644"/>
<dbReference type="OMA" id="LCDADNI"/>
<dbReference type="OrthoDB" id="10262323at2759"/>
<dbReference type="UniPathway" id="UPA00033">
    <property type="reaction ID" value="UER01027"/>
</dbReference>
<dbReference type="PRO" id="PR:Q5A644"/>
<dbReference type="Proteomes" id="UP000000559">
    <property type="component" value="Chromosome 4"/>
</dbReference>
<dbReference type="GO" id="GO:0005759">
    <property type="term" value="C:mitochondrial matrix"/>
    <property type="evidence" value="ECO:0007669"/>
    <property type="project" value="EnsemblFungi"/>
</dbReference>
<dbReference type="GO" id="GO:0051539">
    <property type="term" value="F:4 iron, 4 sulfur cluster binding"/>
    <property type="evidence" value="ECO:0007669"/>
    <property type="project" value="InterPro"/>
</dbReference>
<dbReference type="GO" id="GO:0004409">
    <property type="term" value="F:homoaconitate hydratase activity"/>
    <property type="evidence" value="ECO:0007669"/>
    <property type="project" value="UniProtKB-EC"/>
</dbReference>
<dbReference type="GO" id="GO:0046872">
    <property type="term" value="F:metal ion binding"/>
    <property type="evidence" value="ECO:0007669"/>
    <property type="project" value="UniProtKB-KW"/>
</dbReference>
<dbReference type="GO" id="GO:0009085">
    <property type="term" value="P:lysine biosynthetic process"/>
    <property type="evidence" value="ECO:0000315"/>
    <property type="project" value="CGD"/>
</dbReference>
<dbReference type="GO" id="GO:0019878">
    <property type="term" value="P:lysine biosynthetic process via aminoadipic acid"/>
    <property type="evidence" value="ECO:0007669"/>
    <property type="project" value="UniProtKB-UniPathway"/>
</dbReference>
<dbReference type="CDD" id="cd01582">
    <property type="entry name" value="Homoaconitase"/>
    <property type="match status" value="1"/>
</dbReference>
<dbReference type="CDD" id="cd01674">
    <property type="entry name" value="Homoaconitase_Swivel"/>
    <property type="match status" value="1"/>
</dbReference>
<dbReference type="FunFam" id="3.30.499.10:FF:000013">
    <property type="entry name" value="Homoaconitase, mitochondrial"/>
    <property type="match status" value="1"/>
</dbReference>
<dbReference type="FunFam" id="3.30.499.10:FF:000016">
    <property type="entry name" value="Homoaconitase, mitochondrial"/>
    <property type="match status" value="1"/>
</dbReference>
<dbReference type="Gene3D" id="3.30.499.10">
    <property type="entry name" value="Aconitase, domain 3"/>
    <property type="match status" value="2"/>
</dbReference>
<dbReference type="Gene3D" id="3.20.19.10">
    <property type="entry name" value="Aconitase, domain 4"/>
    <property type="match status" value="1"/>
</dbReference>
<dbReference type="InterPro" id="IPR015931">
    <property type="entry name" value="Acnase/IPM_dHydase_lsu_aba_1/3"/>
</dbReference>
<dbReference type="InterPro" id="IPR001030">
    <property type="entry name" value="Acoase/IPM_deHydtase_lsu_aba"/>
</dbReference>
<dbReference type="InterPro" id="IPR015928">
    <property type="entry name" value="Aconitase/3IPM_dehydase_swvl"/>
</dbReference>
<dbReference type="InterPro" id="IPR018136">
    <property type="entry name" value="Aconitase_4Fe-4S_BS"/>
</dbReference>
<dbReference type="InterPro" id="IPR036008">
    <property type="entry name" value="Aconitase_4Fe-4S_dom"/>
</dbReference>
<dbReference type="InterPro" id="IPR000573">
    <property type="entry name" value="AconitaseA/IPMdHydase_ssu_swvl"/>
</dbReference>
<dbReference type="InterPro" id="IPR004418">
    <property type="entry name" value="Homoaconitase_mito"/>
</dbReference>
<dbReference type="InterPro" id="IPR039386">
    <property type="entry name" value="Homoaconitase_swivel"/>
</dbReference>
<dbReference type="InterPro" id="IPR050067">
    <property type="entry name" value="IPM_dehydratase_rel_enz"/>
</dbReference>
<dbReference type="NCBIfam" id="TIGR00139">
    <property type="entry name" value="h_aconitase"/>
    <property type="match status" value="1"/>
</dbReference>
<dbReference type="PANTHER" id="PTHR43822:SF2">
    <property type="entry name" value="HOMOACONITASE, MITOCHONDRIAL"/>
    <property type="match status" value="1"/>
</dbReference>
<dbReference type="PANTHER" id="PTHR43822">
    <property type="entry name" value="HOMOACONITASE, MITOCHONDRIAL-RELATED"/>
    <property type="match status" value="1"/>
</dbReference>
<dbReference type="Pfam" id="PF00330">
    <property type="entry name" value="Aconitase"/>
    <property type="match status" value="1"/>
</dbReference>
<dbReference type="Pfam" id="PF00694">
    <property type="entry name" value="Aconitase_C"/>
    <property type="match status" value="1"/>
</dbReference>
<dbReference type="PRINTS" id="PR00415">
    <property type="entry name" value="ACONITASE"/>
</dbReference>
<dbReference type="SUPFAM" id="SSF53732">
    <property type="entry name" value="Aconitase iron-sulfur domain"/>
    <property type="match status" value="1"/>
</dbReference>
<dbReference type="SUPFAM" id="SSF52016">
    <property type="entry name" value="LeuD/IlvD-like"/>
    <property type="match status" value="1"/>
</dbReference>
<dbReference type="PROSITE" id="PS00450">
    <property type="entry name" value="ACONITASE_1"/>
    <property type="match status" value="1"/>
</dbReference>
<dbReference type="PROSITE" id="PS01244">
    <property type="entry name" value="ACONITASE_2"/>
    <property type="match status" value="1"/>
</dbReference>
<name>LYS4_CANAL</name>
<feature type="transit peptide" description="Mitochondrion" evidence="2">
    <location>
        <begin position="1"/>
        <end status="unknown"/>
    </location>
</feature>
<feature type="chain" id="PRO_0000247919" description="Homoaconitase, mitochondrial">
    <location>
        <begin status="unknown"/>
        <end position="684"/>
    </location>
</feature>
<feature type="binding site" evidence="1">
    <location>
        <position position="337"/>
    </location>
    <ligand>
        <name>[4Fe-4S] cluster</name>
        <dbReference type="ChEBI" id="CHEBI:49883"/>
    </ligand>
</feature>
<feature type="binding site" evidence="1">
    <location>
        <position position="397"/>
    </location>
    <ligand>
        <name>[4Fe-4S] cluster</name>
        <dbReference type="ChEBI" id="CHEBI:49883"/>
    </ligand>
</feature>
<feature type="binding site" evidence="1">
    <location>
        <position position="400"/>
    </location>
    <ligand>
        <name>[4Fe-4S] cluster</name>
        <dbReference type="ChEBI" id="CHEBI:49883"/>
    </ligand>
</feature>
<organism>
    <name type="scientific">Candida albicans (strain SC5314 / ATCC MYA-2876)</name>
    <name type="common">Yeast</name>
    <dbReference type="NCBI Taxonomy" id="237561"/>
    <lineage>
        <taxon>Eukaryota</taxon>
        <taxon>Fungi</taxon>
        <taxon>Dikarya</taxon>
        <taxon>Ascomycota</taxon>
        <taxon>Saccharomycotina</taxon>
        <taxon>Pichiomycetes</taxon>
        <taxon>Debaryomycetaceae</taxon>
        <taxon>Candida/Lodderomyces clade</taxon>
        <taxon>Candida</taxon>
    </lineage>
</organism>
<proteinExistence type="inferred from homology"/>
<evidence type="ECO:0000250" key="1"/>
<evidence type="ECO:0000255" key="2"/>
<evidence type="ECO:0000305" key="3"/>
<reference key="1">
    <citation type="journal article" date="2004" name="Proc. Natl. Acad. Sci. U.S.A.">
        <title>The diploid genome sequence of Candida albicans.</title>
        <authorList>
            <person name="Jones T."/>
            <person name="Federspiel N.A."/>
            <person name="Chibana H."/>
            <person name="Dungan J."/>
            <person name="Kalman S."/>
            <person name="Magee B.B."/>
            <person name="Newport G."/>
            <person name="Thorstenson Y.R."/>
            <person name="Agabian N."/>
            <person name="Magee P.T."/>
            <person name="Davis R.W."/>
            <person name="Scherer S."/>
        </authorList>
    </citation>
    <scope>NUCLEOTIDE SEQUENCE [LARGE SCALE GENOMIC DNA]</scope>
    <source>
        <strain>SC5314 / ATCC MYA-2876</strain>
    </source>
</reference>
<reference key="2">
    <citation type="journal article" date="2007" name="Genome Biol.">
        <title>Assembly of the Candida albicans genome into sixteen supercontigs aligned on the eight chromosomes.</title>
        <authorList>
            <person name="van het Hoog M."/>
            <person name="Rast T.J."/>
            <person name="Martchenko M."/>
            <person name="Grindle S."/>
            <person name="Dignard D."/>
            <person name="Hogues H."/>
            <person name="Cuomo C."/>
            <person name="Berriman M."/>
            <person name="Scherer S."/>
            <person name="Magee B.B."/>
            <person name="Whiteway M."/>
            <person name="Chibana H."/>
            <person name="Nantel A."/>
            <person name="Magee P.T."/>
        </authorList>
    </citation>
    <scope>GENOME REANNOTATION</scope>
    <source>
        <strain>SC5314 / ATCC MYA-2876</strain>
    </source>
</reference>
<reference key="3">
    <citation type="journal article" date="2013" name="Genome Biol.">
        <title>Assembly of a phased diploid Candida albicans genome facilitates allele-specific measurements and provides a simple model for repeat and indel structure.</title>
        <authorList>
            <person name="Muzzey D."/>
            <person name="Schwartz K."/>
            <person name="Weissman J.S."/>
            <person name="Sherlock G."/>
        </authorList>
    </citation>
    <scope>NUCLEOTIDE SEQUENCE [LARGE SCALE GENOMIC DNA]</scope>
    <scope>GENOME REANNOTATION</scope>
    <source>
        <strain>SC5314 / ATCC MYA-2876</strain>
    </source>
</reference>
<accession>Q5A644</accession>
<accession>A0A1D8PM26</accession>
<keyword id="KW-0028">Amino-acid biosynthesis</keyword>
<keyword id="KW-0408">Iron</keyword>
<keyword id="KW-0411">Iron-sulfur</keyword>
<keyword id="KW-0456">Lyase</keyword>
<keyword id="KW-0457">Lysine biosynthesis</keyword>
<keyword id="KW-0479">Metal-binding</keyword>
<keyword id="KW-0496">Mitochondrion</keyword>
<keyword id="KW-1185">Reference proteome</keyword>
<keyword id="KW-0809">Transit peptide</keyword>
<sequence length="684" mass="74456">MMLRFRSFSTTTHLLRGQNLTEKIVQKYAVGLQPSSKKVYSGDYVTIKPAHCMSHDNSWPVATKFMNLGASKVKDNRQIVCTLDHDVQNKSEQNLTKYTNIEKFAKSQGIDFYPAGRGIGHQIMIEEGYAFPLNLTVASDSHSNTYGGIGALGTPIVRTDAASIWATGQTWWQIPPVAKVELIGQLPKGVTGKDIIVALCGIFNNDEVLNHAIEFVGDDAISKLPIDYRLTIANMTTEWGALSGLFPVDETLVEFYQNRLKKLNKPDHPRINNQTIDQLINNKLTSDNDAVYAKHLQIDLSSLSPYISGPNSVKISNSLYDLSQQNIAINKAYLVSCTNSRLSDIQAAADIIKGHKVNPNVEFYVAAASSLVQKDAEQSGAWQTILDAGAKPLPAGCGPCIGLGTGLLKDGEVGISATNRNFKGRMGSKDALAYLASPEVVAASAVLGKIGGPEELNGEPVKQAPRIIKSIETESNSANEAESTSEEASGSIDILPGFPQSIEGELILCNADNINTDGIYPGKYTYQDDITKEQMAKVCMENYDSQFYSKTKPGDIIISGYNFGTGSSREQAATCILARGMKLIVAGSFGNIFSRNSINNALLTLEIPDLINKLRQQYEGNDELTIRTGWFLKWDVTKAQVTVVDGDDNLILTQKVGELGTNLQDIIVKGGLEGWVKSELKTNQ</sequence>
<protein>
    <recommendedName>
        <fullName>Homoaconitase, mitochondrial</fullName>
        <ecNumber>4.2.1.36</ecNumber>
    </recommendedName>
    <alternativeName>
        <fullName>Homoaconitate hydratase</fullName>
    </alternativeName>
</protein>
<gene>
    <name type="primary">LYS4</name>
    <name type="ordered locus">CAALFM_C404410CA</name>
    <name type="ORF">CaO19.11327</name>
    <name type="ORF">CaO19.3846</name>
</gene>